<dbReference type="EC" id="1.16.3.1" evidence="1"/>
<dbReference type="EMBL" id="L37082">
    <property type="protein sequence ID" value="AAA99996.1"/>
    <property type="molecule type" value="mRNA"/>
</dbReference>
<dbReference type="EMBL" id="AF326342">
    <property type="protein sequence ID" value="AAK15639.1"/>
    <property type="molecule type" value="mRNA"/>
</dbReference>
<dbReference type="EMBL" id="AY064106">
    <property type="protein sequence ID" value="AAL85607.1"/>
    <property type="molecule type" value="mRNA"/>
</dbReference>
<dbReference type="EMBL" id="CH477437">
    <property type="protein sequence ID" value="EAT40925.1"/>
    <property type="molecule type" value="Genomic_DNA"/>
</dbReference>
<dbReference type="EMBL" id="CH477437">
    <property type="protein sequence ID" value="EAT40926.1"/>
    <property type="molecule type" value="Genomic_DNA"/>
</dbReference>
<dbReference type="RefSeq" id="XP_001652731.1">
    <property type="nucleotide sequence ID" value="XM_001652681.1"/>
</dbReference>
<dbReference type="RefSeq" id="XP_001652732.1">
    <property type="nucleotide sequence ID" value="XM_001652682.1"/>
</dbReference>
<dbReference type="SMR" id="P41822"/>
<dbReference type="FunCoup" id="P41822">
    <property type="interactions" value="17"/>
</dbReference>
<dbReference type="STRING" id="7159.P41822"/>
<dbReference type="PaxDb" id="7159-AAEL007385-PB"/>
<dbReference type="GeneID" id="5569124"/>
<dbReference type="KEGG" id="aag:5569124"/>
<dbReference type="CTD" id="46415"/>
<dbReference type="VEuPathDB" id="VectorBase:AAEL007385"/>
<dbReference type="eggNOG" id="KOG2332">
    <property type="taxonomic scope" value="Eukaryota"/>
</dbReference>
<dbReference type="HOGENOM" id="CLU_065681_2_0_1"/>
<dbReference type="InParanoid" id="P41822"/>
<dbReference type="OrthoDB" id="186462at2759"/>
<dbReference type="Proteomes" id="UP000008820">
    <property type="component" value="Unassembled WGS sequence"/>
</dbReference>
<dbReference type="Proteomes" id="UP000682892">
    <property type="component" value="Chromosome 1"/>
</dbReference>
<dbReference type="GO" id="GO:0005737">
    <property type="term" value="C:cytoplasm"/>
    <property type="evidence" value="ECO:0000314"/>
    <property type="project" value="UniProtKB"/>
</dbReference>
<dbReference type="GO" id="GO:0005615">
    <property type="term" value="C:extracellular space"/>
    <property type="evidence" value="ECO:0000314"/>
    <property type="project" value="UniProtKB"/>
</dbReference>
<dbReference type="GO" id="GO:0008199">
    <property type="term" value="F:ferric iron binding"/>
    <property type="evidence" value="ECO:0007669"/>
    <property type="project" value="InterPro"/>
</dbReference>
<dbReference type="GO" id="GO:0008198">
    <property type="term" value="F:ferrous iron binding"/>
    <property type="evidence" value="ECO:0007669"/>
    <property type="project" value="TreeGrafter"/>
</dbReference>
<dbReference type="GO" id="GO:0004322">
    <property type="term" value="F:ferroxidase activity"/>
    <property type="evidence" value="ECO:0007669"/>
    <property type="project" value="UniProtKB-EC"/>
</dbReference>
<dbReference type="GO" id="GO:0006879">
    <property type="term" value="P:intracellular iron ion homeostasis"/>
    <property type="evidence" value="ECO:0007669"/>
    <property type="project" value="UniProtKB-KW"/>
</dbReference>
<dbReference type="GO" id="GO:0006826">
    <property type="term" value="P:iron ion transport"/>
    <property type="evidence" value="ECO:0007669"/>
    <property type="project" value="InterPro"/>
</dbReference>
<dbReference type="CDD" id="cd01056">
    <property type="entry name" value="Euk_Ferritin"/>
    <property type="match status" value="1"/>
</dbReference>
<dbReference type="Gene3D" id="1.20.1260.10">
    <property type="match status" value="1"/>
</dbReference>
<dbReference type="InterPro" id="IPR001519">
    <property type="entry name" value="Ferritin"/>
</dbReference>
<dbReference type="InterPro" id="IPR012347">
    <property type="entry name" value="Ferritin-like"/>
</dbReference>
<dbReference type="InterPro" id="IPR009040">
    <property type="entry name" value="Ferritin-like_diiron"/>
</dbReference>
<dbReference type="InterPro" id="IPR009078">
    <property type="entry name" value="Ferritin-like_SF"/>
</dbReference>
<dbReference type="InterPro" id="IPR008331">
    <property type="entry name" value="Ferritin_DPS_dom"/>
</dbReference>
<dbReference type="PANTHER" id="PTHR11431">
    <property type="entry name" value="FERRITIN"/>
    <property type="match status" value="1"/>
</dbReference>
<dbReference type="PANTHER" id="PTHR11431:SF43">
    <property type="entry name" value="FERRITIN"/>
    <property type="match status" value="1"/>
</dbReference>
<dbReference type="Pfam" id="PF00210">
    <property type="entry name" value="Ferritin"/>
    <property type="match status" value="1"/>
</dbReference>
<dbReference type="SUPFAM" id="SSF47240">
    <property type="entry name" value="Ferritin-like"/>
    <property type="match status" value="1"/>
</dbReference>
<dbReference type="PROSITE" id="PS50905">
    <property type="entry name" value="FERRITIN_LIKE"/>
    <property type="match status" value="1"/>
</dbReference>
<accession>P41822</accession>
<accession>Q172H1</accession>
<keyword id="KW-0963">Cytoplasm</keyword>
<keyword id="KW-0903">Direct protein sequencing</keyword>
<keyword id="KW-0408">Iron</keyword>
<keyword id="KW-0409">Iron storage</keyword>
<keyword id="KW-0479">Metal-binding</keyword>
<keyword id="KW-0560">Oxidoreductase</keyword>
<keyword id="KW-1185">Reference proteome</keyword>
<keyword id="KW-0964">Secreted</keyword>
<keyword id="KW-0732">Signal</keyword>
<reference key="1">
    <citation type="journal article" date="1995" name="Arch. Insect Biochem. Physiol.">
        <title>Isolation and characterization of mosquito ferritin and cloning of a cDNA that encodes one subunit.</title>
        <authorList>
            <person name="Dunkov B.C."/>
            <person name="Zhang D."/>
            <person name="Choumarov K."/>
            <person name="Winzerling J.J."/>
            <person name="Law J.H."/>
        </authorList>
    </citation>
    <scope>NUCLEOTIDE SEQUENCE [MRNA]</scope>
    <scope>PROTEIN SEQUENCE OF 28-68</scope>
    <scope>DEVELOPMENTAL STAGE</scope>
    <source>
        <strain>Rockefeller</strain>
    </source>
</reference>
<reference key="2">
    <citation type="submission" date="2000-12" db="EMBL/GenBank/DDBJ databases">
        <title>Aedes aegypti ferritin heavy chain-like protein.</title>
        <authorList>
            <person name="Morlais I."/>
            <person name="Severson D.W."/>
        </authorList>
    </citation>
    <scope>NUCLEOTIDE SEQUENCE [MRNA]</scope>
    <source>
        <strain>Red eye</strain>
        <tissue>Midgut</tissue>
    </source>
</reference>
<reference key="3">
    <citation type="submission" date="2001-11" db="EMBL/GenBank/DDBJ databases">
        <title>Single nucleotide polymorphism and codon usage bias in Aedes aegypti.</title>
        <authorList>
            <person name="Morlais I."/>
            <person name="Severson D.W."/>
        </authorList>
    </citation>
    <scope>NUCLEOTIDE SEQUENCE [MRNA]</scope>
    <source>
        <strain>Red eye</strain>
        <tissue>Midgut</tissue>
    </source>
</reference>
<reference key="4">
    <citation type="journal article" date="2007" name="Science">
        <title>Genome sequence of Aedes aegypti, a major arbovirus vector.</title>
        <authorList>
            <person name="Nene V."/>
            <person name="Wortman J.R."/>
            <person name="Lawson D."/>
            <person name="Haas B.J."/>
            <person name="Kodira C.D."/>
            <person name="Tu Z.J."/>
            <person name="Loftus B.J."/>
            <person name="Xi Z."/>
            <person name="Megy K."/>
            <person name="Grabherr M."/>
            <person name="Ren Q."/>
            <person name="Zdobnov E.M."/>
            <person name="Lobo N.F."/>
            <person name="Campbell K.S."/>
            <person name="Brown S.E."/>
            <person name="Bonaldo M.F."/>
            <person name="Zhu J."/>
            <person name="Sinkins S.P."/>
            <person name="Hogenkamp D.G."/>
            <person name="Amedeo P."/>
            <person name="Arensburger P."/>
            <person name="Atkinson P.W."/>
            <person name="Bidwell S.L."/>
            <person name="Biedler J."/>
            <person name="Birney E."/>
            <person name="Bruggner R.V."/>
            <person name="Costas J."/>
            <person name="Coy M.R."/>
            <person name="Crabtree J."/>
            <person name="Crawford M."/>
            <person name="DeBruyn B."/>
            <person name="DeCaprio D."/>
            <person name="Eiglmeier K."/>
            <person name="Eisenstadt E."/>
            <person name="El-Dorry H."/>
            <person name="Gelbart W.M."/>
            <person name="Gomes S.L."/>
            <person name="Hammond M."/>
            <person name="Hannick L.I."/>
            <person name="Hogan J.R."/>
            <person name="Holmes M.H."/>
            <person name="Jaffe D."/>
            <person name="Johnston S.J."/>
            <person name="Kennedy R.C."/>
            <person name="Koo H."/>
            <person name="Kravitz S."/>
            <person name="Kriventseva E.V."/>
            <person name="Kulp D."/>
            <person name="Labutti K."/>
            <person name="Lee E."/>
            <person name="Li S."/>
            <person name="Lovin D.D."/>
            <person name="Mao C."/>
            <person name="Mauceli E."/>
            <person name="Menck C.F."/>
            <person name="Miller J.R."/>
            <person name="Montgomery P."/>
            <person name="Mori A."/>
            <person name="Nascimento A.L."/>
            <person name="Naveira H.F."/>
            <person name="Nusbaum C."/>
            <person name="O'Leary S.B."/>
            <person name="Orvis J."/>
            <person name="Pertea M."/>
            <person name="Quesneville H."/>
            <person name="Reidenbach K.R."/>
            <person name="Rogers Y.-H.C."/>
            <person name="Roth C.W."/>
            <person name="Schneider J.R."/>
            <person name="Schatz M."/>
            <person name="Shumway M."/>
            <person name="Stanke M."/>
            <person name="Stinson E.O."/>
            <person name="Tubio J.M.C."/>
            <person name="Vanzee J.P."/>
            <person name="Verjovski-Almeida S."/>
            <person name="Werner D."/>
            <person name="White O.R."/>
            <person name="Wyder S."/>
            <person name="Zeng Q."/>
            <person name="Zhao Q."/>
            <person name="Zhao Y."/>
            <person name="Hill C.A."/>
            <person name="Raikhel A.S."/>
            <person name="Soares M.B."/>
            <person name="Knudson D.L."/>
            <person name="Lee N.H."/>
            <person name="Galagan J."/>
            <person name="Salzberg S.L."/>
            <person name="Paulsen I.T."/>
            <person name="Dimopoulos G."/>
            <person name="Collins F.H."/>
            <person name="Bruce B."/>
            <person name="Fraser-Liggett C.M."/>
            <person name="Severson D.W."/>
        </authorList>
    </citation>
    <scope>NUCLEOTIDE SEQUENCE [LARGE SCALE GENOMIC DNA]</scope>
    <source>
        <strain>LVPib12</strain>
    </source>
</reference>
<reference key="5">
    <citation type="journal article" date="2003" name="Eur. J. Biochem.">
        <title>Aedes aegypti ferritin.</title>
        <authorList>
            <person name="Geiser D.L."/>
            <person name="Chavez C.A."/>
            <person name="Flores-Munguia R."/>
            <person name="Winzerling J.J."/>
            <person name="Pham D.Q.-D."/>
        </authorList>
    </citation>
    <scope>INDUCTION</scope>
    <scope>DEVELOPMENTAL STAGE</scope>
</reference>
<reference key="6">
    <citation type="journal article" date="2006" name="Insect Biochem. Mol. Biol.">
        <title>Secreted ferritin: mosquito defense against iron overload?</title>
        <authorList>
            <person name="Geiser D.L."/>
            <person name="Zhang D."/>
            <person name="Winzerling J.J."/>
        </authorList>
    </citation>
    <scope>SUBCELLULAR LOCATION</scope>
    <scope>INDUCTION</scope>
</reference>
<gene>
    <name type="primary">FERH</name>
    <name evidence="6" type="synonym">HCH</name>
    <name type="ORF">AAEL007385</name>
</gene>
<name>FRIH_AEDAE</name>
<evidence type="ECO:0000250" key="1">
    <source>
        <dbReference type="UniProtKB" id="P02794"/>
    </source>
</evidence>
<evidence type="ECO:0000255" key="2">
    <source>
        <dbReference type="PROSITE-ProRule" id="PRU00085"/>
    </source>
</evidence>
<evidence type="ECO:0000269" key="3">
    <source>
    </source>
</evidence>
<evidence type="ECO:0000269" key="4">
    <source>
    </source>
</evidence>
<evidence type="ECO:0000269" key="5">
    <source>
    </source>
</evidence>
<evidence type="ECO:0000303" key="6">
    <source>
    </source>
</evidence>
<evidence type="ECO:0000305" key="7"/>
<sequence>MMKSVFFGVVAITVAILSIYQETAQAQEQTVGATDNYQWDSVDDQCLAALHRQINKEFDASIIYLKYAAYFAQEKINLPGFEKFFFHSAAEEREHGIKLIEYALMRGKAPVDKHFKLNYDHEVPTVTTGESALETALQKEVEVTKSIRGVIKACEDGSNDFHLADYLTGEYLDEQHKGQRELAEKIATLKKMKKSAPKLGEFLFDKNHM</sequence>
<proteinExistence type="evidence at protein level"/>
<protein>
    <recommendedName>
        <fullName evidence="7">Ferritin heavy chain</fullName>
        <ecNumber evidence="1">1.16.3.1</ecNumber>
    </recommendedName>
    <alternativeName>
        <fullName>AeFer(H)</fullName>
    </alternativeName>
    <alternativeName>
        <fullName>Ferritin heavy chain-like protein</fullName>
    </alternativeName>
</protein>
<feature type="signal peptide" evidence="5">
    <location>
        <begin position="1"/>
        <end position="27"/>
    </location>
</feature>
<feature type="chain" id="PRO_0000008853" description="Ferritin heavy chain">
    <location>
        <begin position="28"/>
        <end position="209"/>
    </location>
</feature>
<feature type="domain" description="Ferritin-like diiron" evidence="2">
    <location>
        <begin position="40"/>
        <end position="193"/>
    </location>
</feature>
<feature type="binding site" evidence="2">
    <location>
        <position position="57"/>
    </location>
    <ligand>
        <name>Fe cation</name>
        <dbReference type="ChEBI" id="CHEBI:24875"/>
        <label>1</label>
    </ligand>
</feature>
<feature type="binding site" evidence="2">
    <location>
        <position position="92"/>
    </location>
    <ligand>
        <name>Fe cation</name>
        <dbReference type="ChEBI" id="CHEBI:24875"/>
        <label>1</label>
    </ligand>
</feature>
<feature type="binding site" evidence="2">
    <location>
        <position position="92"/>
    </location>
    <ligand>
        <name>Fe cation</name>
        <dbReference type="ChEBI" id="CHEBI:24875"/>
        <label>2</label>
    </ligand>
</feature>
<feature type="binding site" evidence="2">
    <location>
        <position position="95"/>
    </location>
    <ligand>
        <name>Fe cation</name>
        <dbReference type="ChEBI" id="CHEBI:24875"/>
        <label>1</label>
    </ligand>
</feature>
<feature type="binding site" evidence="2">
    <location>
        <position position="140"/>
    </location>
    <ligand>
        <name>Fe cation</name>
        <dbReference type="ChEBI" id="CHEBI:24875"/>
        <label>2</label>
    </ligand>
</feature>
<feature type="binding site" evidence="2">
    <location>
        <position position="175"/>
    </location>
    <ligand>
        <name>Fe cation</name>
        <dbReference type="ChEBI" id="CHEBI:24875"/>
        <label>2</label>
    </ligand>
</feature>
<feature type="sequence conflict" description="In Ref. 4; EAT40925/EAT40926." evidence="7" ref="4">
    <location>
        <position position="31"/>
    </location>
</feature>
<feature type="sequence conflict" description="In Ref. 1; AAA99996, 2; AAK15639 and 3; AAL85607." evidence="7" ref="1 2 3">
    <original>S</original>
    <variation>A</variation>
    <location>
        <position position="88"/>
    </location>
</feature>
<feature type="sequence conflict" description="In Ref. 1; AAA99996, 2; AAK15639 and 3; AAL85607." evidence="7" ref="1 2 3">
    <original>K</original>
    <variation>R</variation>
    <location>
        <position position="145"/>
    </location>
</feature>
<comment type="function">
    <text evidence="1">Stores iron in a soluble, non-toxic, readily available form. Important for iron homeostasis. Has ferroxidase activity. Iron is taken up in the ferrous form and deposited as ferric hydroxides after oxidation.</text>
</comment>
<comment type="catalytic activity">
    <reaction>
        <text>4 Fe(2+) + O2 + 4 H(+) = 4 Fe(3+) + 2 H2O</text>
        <dbReference type="Rhea" id="RHEA:11148"/>
        <dbReference type="ChEBI" id="CHEBI:15377"/>
        <dbReference type="ChEBI" id="CHEBI:15378"/>
        <dbReference type="ChEBI" id="CHEBI:15379"/>
        <dbReference type="ChEBI" id="CHEBI:29033"/>
        <dbReference type="ChEBI" id="CHEBI:29034"/>
        <dbReference type="EC" id="1.16.3.1"/>
    </reaction>
</comment>
<comment type="subunit">
    <text evidence="1">Oligomer of 24 subunits. There are two types of subunits: L (light) chain and H (heavy) chain. The functional molecule forms a roughly spherical shell with a diameter of 12 nm and contains a central cavity into which the insoluble mineral iron core is deposited.</text>
</comment>
<comment type="subcellular location">
    <subcellularLocation>
        <location evidence="4">Secreted</location>
    </subcellularLocation>
    <subcellularLocation>
        <location evidence="4">Cytoplasm</location>
    </subcellularLocation>
</comment>
<comment type="developmental stage">
    <text evidence="3 5">Expressed in larvae, pupae and female adults (at protein Level).</text>
</comment>
<comment type="induction">
    <text evidence="3 4">By blood meal, iron and hydrogen peroxide (at protein level).</text>
</comment>
<comment type="similarity">
    <text evidence="7">Belongs to the ferritin family.</text>
</comment>
<organism>
    <name type="scientific">Aedes aegypti</name>
    <name type="common">Yellowfever mosquito</name>
    <name type="synonym">Culex aegypti</name>
    <dbReference type="NCBI Taxonomy" id="7159"/>
    <lineage>
        <taxon>Eukaryota</taxon>
        <taxon>Metazoa</taxon>
        <taxon>Ecdysozoa</taxon>
        <taxon>Arthropoda</taxon>
        <taxon>Hexapoda</taxon>
        <taxon>Insecta</taxon>
        <taxon>Pterygota</taxon>
        <taxon>Neoptera</taxon>
        <taxon>Endopterygota</taxon>
        <taxon>Diptera</taxon>
        <taxon>Nematocera</taxon>
        <taxon>Culicoidea</taxon>
        <taxon>Culicidae</taxon>
        <taxon>Culicinae</taxon>
        <taxon>Aedini</taxon>
        <taxon>Aedes</taxon>
        <taxon>Stegomyia</taxon>
    </lineage>
</organism>